<protein>
    <recommendedName>
        <fullName>F-box/LRR-repeat protein 15</fullName>
    </recommendedName>
</protein>
<reference key="1">
    <citation type="submission" date="2010-06" db="EMBL/GenBank/DDBJ databases">
        <title>Chromosome directed sequencing of European seabass (Dicentrarchus labrax L.) by comparatively mapped BAC clones.</title>
        <authorList>
            <person name="Kuhl H."/>
            <person name="Tine M."/>
            <person name="Beck A."/>
            <person name="Timmermann B."/>
            <person name="Reinhardt R."/>
        </authorList>
    </citation>
    <scope>NUCLEOTIDE SEQUENCE [LARGE SCALE GENOMIC DNA]</scope>
</reference>
<proteinExistence type="inferred from homology"/>
<organism>
    <name type="scientific">Dicentrarchus labrax</name>
    <name type="common">European seabass</name>
    <name type="synonym">Morone labrax</name>
    <dbReference type="NCBI Taxonomy" id="13489"/>
    <lineage>
        <taxon>Eukaryota</taxon>
        <taxon>Metazoa</taxon>
        <taxon>Chordata</taxon>
        <taxon>Craniata</taxon>
        <taxon>Vertebrata</taxon>
        <taxon>Euteleostomi</taxon>
        <taxon>Actinopterygii</taxon>
        <taxon>Neopterygii</taxon>
        <taxon>Teleostei</taxon>
        <taxon>Neoteleostei</taxon>
        <taxon>Acanthomorphata</taxon>
        <taxon>Eupercaria</taxon>
        <taxon>Moronidae</taxon>
        <taxon>Dicentrarchus</taxon>
    </lineage>
</organism>
<comment type="function">
    <text evidence="1">Substrate recognition component of a SCF (SKP1-CUL1-F-box protein) E3 ubiquitin-protein ligase complex which mediates the ubiquitination and subsequent proteasomal degradation of target proteins. Acts as a positive regulator of the BMP signaling pathway. Required for dorsal/ventral pattern formation (By similarity).</text>
</comment>
<comment type="pathway">
    <text>Protein modification; protein ubiquitination.</text>
</comment>
<comment type="subunit">
    <text evidence="1">Part of the SCF (SKP1-CUL1-F-box) E3 ubiquitin-protein ligase complex SCF(FBXL15).</text>
</comment>
<comment type="subcellular location">
    <subcellularLocation>
        <location evidence="1">Cytoplasm</location>
    </subcellularLocation>
</comment>
<comment type="similarity">
    <text evidence="2">Belongs to the FBXL15 family.</text>
</comment>
<comment type="sequence caution" evidence="2">
    <conflict type="erroneous gene model prediction">
        <sequence resource="EMBL-CDS" id="CBN81533"/>
    </conflict>
</comment>
<dbReference type="EMBL" id="FQ310507">
    <property type="protein sequence ID" value="CBN81532.1"/>
    <property type="molecule type" value="Genomic_DNA"/>
</dbReference>
<dbReference type="EMBL" id="FQ310507">
    <property type="protein sequence ID" value="CBN81533.1"/>
    <property type="status" value="ALT_SEQ"/>
    <property type="molecule type" value="Genomic_DNA"/>
</dbReference>
<dbReference type="RefSeq" id="XP_051272828.1">
    <property type="nucleotide sequence ID" value="XM_051416868.1"/>
</dbReference>
<dbReference type="SMR" id="E6ZHJ8"/>
<dbReference type="Ensembl" id="ENSDLAT00005056512.2">
    <property type="protein sequence ID" value="ENSDLAP00005053134.1"/>
    <property type="gene ID" value="ENSDLAG00005022905.2"/>
</dbReference>
<dbReference type="GeneID" id="127372941"/>
<dbReference type="GeneTree" id="ENSGT00940000160250"/>
<dbReference type="UniPathway" id="UPA00143"/>
<dbReference type="Proteomes" id="UP000694389">
    <property type="component" value="Unassembled WGS sequence"/>
</dbReference>
<dbReference type="GO" id="GO:0005737">
    <property type="term" value="C:cytoplasm"/>
    <property type="evidence" value="ECO:0000250"/>
    <property type="project" value="UniProtKB"/>
</dbReference>
<dbReference type="GO" id="GO:0019005">
    <property type="term" value="C:SCF ubiquitin ligase complex"/>
    <property type="evidence" value="ECO:0000250"/>
    <property type="project" value="UniProtKB"/>
</dbReference>
<dbReference type="GO" id="GO:0030282">
    <property type="term" value="P:bone mineralization"/>
    <property type="evidence" value="ECO:0000250"/>
    <property type="project" value="UniProtKB"/>
</dbReference>
<dbReference type="GO" id="GO:0009953">
    <property type="term" value="P:dorsal/ventral pattern formation"/>
    <property type="evidence" value="ECO:0000250"/>
    <property type="project" value="UniProtKB"/>
</dbReference>
<dbReference type="GO" id="GO:0000086">
    <property type="term" value="P:G2/M transition of mitotic cell cycle"/>
    <property type="evidence" value="ECO:0000250"/>
    <property type="project" value="UniProtKB"/>
</dbReference>
<dbReference type="GO" id="GO:0030513">
    <property type="term" value="P:positive regulation of BMP signaling pathway"/>
    <property type="evidence" value="ECO:0000250"/>
    <property type="project" value="UniProtKB"/>
</dbReference>
<dbReference type="GO" id="GO:0016567">
    <property type="term" value="P:protein ubiquitination"/>
    <property type="evidence" value="ECO:0000250"/>
    <property type="project" value="UniProtKB"/>
</dbReference>
<dbReference type="GO" id="GO:0031146">
    <property type="term" value="P:SCF-dependent proteasomal ubiquitin-dependent protein catabolic process"/>
    <property type="evidence" value="ECO:0000250"/>
    <property type="project" value="UniProtKB"/>
</dbReference>
<dbReference type="CDD" id="cd22126">
    <property type="entry name" value="F-box_FBXL15"/>
    <property type="match status" value="1"/>
</dbReference>
<dbReference type="FunFam" id="3.80.10.10:FF:000113">
    <property type="entry name" value="F-box/LRR-repeat protein 15 isoform X1"/>
    <property type="match status" value="1"/>
</dbReference>
<dbReference type="Gene3D" id="3.80.10.10">
    <property type="entry name" value="Ribonuclease Inhibitor"/>
    <property type="match status" value="1"/>
</dbReference>
<dbReference type="InterPro" id="IPR036047">
    <property type="entry name" value="F-box-like_dom_sf"/>
</dbReference>
<dbReference type="InterPro" id="IPR001810">
    <property type="entry name" value="F-box_dom"/>
</dbReference>
<dbReference type="InterPro" id="IPR006553">
    <property type="entry name" value="Leu-rich_rpt_Cys-con_subtyp"/>
</dbReference>
<dbReference type="InterPro" id="IPR032675">
    <property type="entry name" value="LRR_dom_sf"/>
</dbReference>
<dbReference type="PANTHER" id="PTHR13318:SF179">
    <property type="entry name" value="F-BOX_LRR-REPEAT PROTEIN 15"/>
    <property type="match status" value="1"/>
</dbReference>
<dbReference type="PANTHER" id="PTHR13318">
    <property type="entry name" value="PARTNER OF PAIRED, ISOFORM B-RELATED"/>
    <property type="match status" value="1"/>
</dbReference>
<dbReference type="Pfam" id="PF00646">
    <property type="entry name" value="F-box"/>
    <property type="match status" value="1"/>
</dbReference>
<dbReference type="SMART" id="SM00367">
    <property type="entry name" value="LRR_CC"/>
    <property type="match status" value="6"/>
</dbReference>
<dbReference type="SUPFAM" id="SSF81383">
    <property type="entry name" value="F-box domain"/>
    <property type="match status" value="1"/>
</dbReference>
<dbReference type="SUPFAM" id="SSF52047">
    <property type="entry name" value="RNI-like"/>
    <property type="match status" value="1"/>
</dbReference>
<gene>
    <name type="primary">fbxl15</name>
    <name type="ORF">DLA_Ib03740</name>
    <name type="ORF">DLA_Ib03750</name>
</gene>
<name>FXL15_DICLA</name>
<accession>E6ZHJ8</accession>
<accession>E6ZHJ9</accession>
<sequence length="292" mass="32866">MDEEAKIRTCQLLDLPWEDVLIPHILCYLPLQHLVSLQRVSKQFHSLIQVYLTNCRTFDLTSIGPSIPKEAFCSMLKDNKVLHSLSLQNCSDWVTDKELLPVIGQNQHLQRVDMSGCVCLTRHSLVAVSLSCMHLQHLGLAHCEWVDSLSLRSLADHCGGLQSIDLTACRQLKDDAICYLAKKCLKLRSLSLAVNANITDESVEEVAKNCRGLEQLDLTGCLRVRNQSIRTLAEYCPKLQSLKVNHCHNVTESSLDPLRKRNVVIDVEPPLQRALVLLQDVLGFAPFINLQI</sequence>
<evidence type="ECO:0000250" key="1"/>
<evidence type="ECO:0000305" key="2"/>
<keyword id="KW-0963">Cytoplasm</keyword>
<keyword id="KW-0433">Leucine-rich repeat</keyword>
<keyword id="KW-1185">Reference proteome</keyword>
<keyword id="KW-0677">Repeat</keyword>
<keyword id="KW-0833">Ubl conjugation pathway</keyword>
<feature type="chain" id="PRO_0000410907" description="F-box/LRR-repeat protein 15">
    <location>
        <begin position="1"/>
        <end position="292"/>
    </location>
</feature>
<feature type="domain" description="F-box">
    <location>
        <begin position="12"/>
        <end position="59"/>
    </location>
</feature>
<feature type="repeat" description="LRR 1">
    <location>
        <begin position="134"/>
        <end position="155"/>
    </location>
</feature>
<feature type="repeat" description="LRR 2">
    <location>
        <begin position="160"/>
        <end position="181"/>
    </location>
</feature>
<feature type="repeat" description="LRR 3">
    <location>
        <begin position="186"/>
        <end position="207"/>
    </location>
</feature>
<feature type="repeat" description="LRR 4">
    <location>
        <begin position="212"/>
        <end position="233"/>
    </location>
</feature>
<feature type="repeat" description="LRR 5">
    <location>
        <begin position="238"/>
        <end position="259"/>
    </location>
</feature>